<proteinExistence type="inferred from homology"/>
<sequence>MTTESLETLVEQLSGLTVLELSQLKKLLEEKWDVTAAAPVVAVAGAAAAGDAPASAEPTEFAVILEDVPSDKKIGVLKVVREVTGLALKEAKEMTEGLPKTVKEKTSKSDAEDTVKKLQEAGAKAVAKGL</sequence>
<dbReference type="EMBL" id="CP000051">
    <property type="protein sequence ID" value="AAX50576.1"/>
    <property type="molecule type" value="Genomic_DNA"/>
</dbReference>
<dbReference type="RefSeq" id="WP_009872553.1">
    <property type="nucleotide sequence ID" value="NC_007429.1"/>
</dbReference>
<dbReference type="SMR" id="Q3KM46"/>
<dbReference type="KEGG" id="cta:CTA_0338"/>
<dbReference type="HOGENOM" id="CLU_086499_3_0_0"/>
<dbReference type="Proteomes" id="UP000002532">
    <property type="component" value="Chromosome"/>
</dbReference>
<dbReference type="GO" id="GO:0022625">
    <property type="term" value="C:cytosolic large ribosomal subunit"/>
    <property type="evidence" value="ECO:0007669"/>
    <property type="project" value="TreeGrafter"/>
</dbReference>
<dbReference type="GO" id="GO:0003729">
    <property type="term" value="F:mRNA binding"/>
    <property type="evidence" value="ECO:0007669"/>
    <property type="project" value="TreeGrafter"/>
</dbReference>
<dbReference type="GO" id="GO:0003735">
    <property type="term" value="F:structural constituent of ribosome"/>
    <property type="evidence" value="ECO:0007669"/>
    <property type="project" value="InterPro"/>
</dbReference>
<dbReference type="GO" id="GO:0006412">
    <property type="term" value="P:translation"/>
    <property type="evidence" value="ECO:0007669"/>
    <property type="project" value="UniProtKB-UniRule"/>
</dbReference>
<dbReference type="CDD" id="cd00387">
    <property type="entry name" value="Ribosomal_L7_L12"/>
    <property type="match status" value="1"/>
</dbReference>
<dbReference type="FunFam" id="1.20.5.710:FF:000007">
    <property type="entry name" value="50S ribosomal protein L7/L12"/>
    <property type="match status" value="1"/>
</dbReference>
<dbReference type="FunFam" id="3.30.1390.10:FF:000001">
    <property type="entry name" value="50S ribosomal protein L7/L12"/>
    <property type="match status" value="1"/>
</dbReference>
<dbReference type="Gene3D" id="3.30.1390.10">
    <property type="match status" value="1"/>
</dbReference>
<dbReference type="Gene3D" id="1.20.5.710">
    <property type="entry name" value="Single helix bin"/>
    <property type="match status" value="1"/>
</dbReference>
<dbReference type="HAMAP" id="MF_00368">
    <property type="entry name" value="Ribosomal_bL12"/>
    <property type="match status" value="1"/>
</dbReference>
<dbReference type="InterPro" id="IPR000206">
    <property type="entry name" value="Ribosomal_bL12"/>
</dbReference>
<dbReference type="InterPro" id="IPR013823">
    <property type="entry name" value="Ribosomal_bL12_C"/>
</dbReference>
<dbReference type="InterPro" id="IPR014719">
    <property type="entry name" value="Ribosomal_bL12_C/ClpS-like"/>
</dbReference>
<dbReference type="InterPro" id="IPR008932">
    <property type="entry name" value="Ribosomal_bL12_oligo"/>
</dbReference>
<dbReference type="InterPro" id="IPR036235">
    <property type="entry name" value="Ribosomal_bL12_oligo_N_sf"/>
</dbReference>
<dbReference type="NCBIfam" id="TIGR00855">
    <property type="entry name" value="L12"/>
    <property type="match status" value="1"/>
</dbReference>
<dbReference type="PANTHER" id="PTHR45987">
    <property type="entry name" value="39S RIBOSOMAL PROTEIN L12"/>
    <property type="match status" value="1"/>
</dbReference>
<dbReference type="PANTHER" id="PTHR45987:SF4">
    <property type="entry name" value="LARGE RIBOSOMAL SUBUNIT PROTEIN BL12M"/>
    <property type="match status" value="1"/>
</dbReference>
<dbReference type="Pfam" id="PF00542">
    <property type="entry name" value="Ribosomal_L12"/>
    <property type="match status" value="1"/>
</dbReference>
<dbReference type="Pfam" id="PF16320">
    <property type="entry name" value="Ribosomal_L12_N"/>
    <property type="match status" value="1"/>
</dbReference>
<dbReference type="SUPFAM" id="SSF54736">
    <property type="entry name" value="ClpS-like"/>
    <property type="match status" value="1"/>
</dbReference>
<dbReference type="SUPFAM" id="SSF48300">
    <property type="entry name" value="Ribosomal protein L7/12, oligomerisation (N-terminal) domain"/>
    <property type="match status" value="1"/>
</dbReference>
<feature type="chain" id="PRO_0000243407" description="Large ribosomal subunit protein bL12">
    <location>
        <begin position="1"/>
        <end position="130"/>
    </location>
</feature>
<accession>Q3KM46</accession>
<gene>
    <name evidence="1" type="primary">rplL</name>
    <name type="ordered locus">CTA_0338</name>
</gene>
<reference key="1">
    <citation type="journal article" date="2005" name="Infect. Immun.">
        <title>Comparative genomic analysis of Chlamydia trachomatis oculotropic and genitotropic strains.</title>
        <authorList>
            <person name="Carlson J.H."/>
            <person name="Porcella S.F."/>
            <person name="McClarty G."/>
            <person name="Caldwell H.D."/>
        </authorList>
    </citation>
    <scope>NUCLEOTIDE SEQUENCE [LARGE SCALE GENOMIC DNA]</scope>
    <source>
        <strain>ATCC VR-571B / DSM 19440 / HAR-13</strain>
    </source>
</reference>
<protein>
    <recommendedName>
        <fullName evidence="1">Large ribosomal subunit protein bL12</fullName>
    </recommendedName>
    <alternativeName>
        <fullName evidence="2">50S ribosomal protein L7/L12</fullName>
    </alternativeName>
</protein>
<name>RL7_CHLTA</name>
<evidence type="ECO:0000255" key="1">
    <source>
        <dbReference type="HAMAP-Rule" id="MF_00368"/>
    </source>
</evidence>
<evidence type="ECO:0000305" key="2"/>
<keyword id="KW-0687">Ribonucleoprotein</keyword>
<keyword id="KW-0689">Ribosomal protein</keyword>
<comment type="function">
    <text evidence="1">Forms part of the ribosomal stalk which helps the ribosome interact with GTP-bound translation factors. Is thus essential for accurate translation.</text>
</comment>
<comment type="subunit">
    <text evidence="1">Homodimer. Part of the ribosomal stalk of the 50S ribosomal subunit. Forms a multimeric L10(L12)X complex, where L10 forms an elongated spine to which 2 to 4 L12 dimers bind in a sequential fashion. Binds GTP-bound translation factors.</text>
</comment>
<comment type="similarity">
    <text evidence="1">Belongs to the bacterial ribosomal protein bL12 family.</text>
</comment>
<organism>
    <name type="scientific">Chlamydia trachomatis serovar A (strain ATCC VR-571B / DSM 19440 / HAR-13)</name>
    <dbReference type="NCBI Taxonomy" id="315277"/>
    <lineage>
        <taxon>Bacteria</taxon>
        <taxon>Pseudomonadati</taxon>
        <taxon>Chlamydiota</taxon>
        <taxon>Chlamydiia</taxon>
        <taxon>Chlamydiales</taxon>
        <taxon>Chlamydiaceae</taxon>
        <taxon>Chlamydia/Chlamydophila group</taxon>
        <taxon>Chlamydia</taxon>
    </lineage>
</organism>